<evidence type="ECO:0000255" key="1">
    <source>
        <dbReference type="HAMAP-Rule" id="MF_00023"/>
    </source>
</evidence>
<proteinExistence type="inferred from homology"/>
<dbReference type="EMBL" id="AL766851">
    <property type="protein sequence ID" value="CAD47206.1"/>
    <property type="molecule type" value="Genomic_DNA"/>
</dbReference>
<dbReference type="RefSeq" id="WP_000238456.1">
    <property type="nucleotide sequence ID" value="NC_004368.1"/>
</dbReference>
<dbReference type="SMR" id="P66864"/>
<dbReference type="GeneID" id="66886342"/>
<dbReference type="KEGG" id="san:gbs1547"/>
<dbReference type="eggNOG" id="COG0691">
    <property type="taxonomic scope" value="Bacteria"/>
</dbReference>
<dbReference type="HOGENOM" id="CLU_108953_0_0_9"/>
<dbReference type="Proteomes" id="UP000000823">
    <property type="component" value="Chromosome"/>
</dbReference>
<dbReference type="GO" id="GO:0005829">
    <property type="term" value="C:cytosol"/>
    <property type="evidence" value="ECO:0007669"/>
    <property type="project" value="TreeGrafter"/>
</dbReference>
<dbReference type="GO" id="GO:0003723">
    <property type="term" value="F:RNA binding"/>
    <property type="evidence" value="ECO:0007669"/>
    <property type="project" value="UniProtKB-UniRule"/>
</dbReference>
<dbReference type="GO" id="GO:0070929">
    <property type="term" value="P:trans-translation"/>
    <property type="evidence" value="ECO:0007669"/>
    <property type="project" value="UniProtKB-UniRule"/>
</dbReference>
<dbReference type="CDD" id="cd09294">
    <property type="entry name" value="SmpB"/>
    <property type="match status" value="1"/>
</dbReference>
<dbReference type="Gene3D" id="2.40.280.10">
    <property type="match status" value="1"/>
</dbReference>
<dbReference type="HAMAP" id="MF_00023">
    <property type="entry name" value="SmpB"/>
    <property type="match status" value="1"/>
</dbReference>
<dbReference type="InterPro" id="IPR023620">
    <property type="entry name" value="SmpB"/>
</dbReference>
<dbReference type="InterPro" id="IPR000037">
    <property type="entry name" value="SsrA-bd_prot"/>
</dbReference>
<dbReference type="InterPro" id="IPR020081">
    <property type="entry name" value="SsrA-bd_prot_CS"/>
</dbReference>
<dbReference type="NCBIfam" id="NF003843">
    <property type="entry name" value="PRK05422.1"/>
    <property type="match status" value="1"/>
</dbReference>
<dbReference type="NCBIfam" id="TIGR00086">
    <property type="entry name" value="smpB"/>
    <property type="match status" value="1"/>
</dbReference>
<dbReference type="PANTHER" id="PTHR30308:SF2">
    <property type="entry name" value="SSRA-BINDING PROTEIN"/>
    <property type="match status" value="1"/>
</dbReference>
<dbReference type="PANTHER" id="PTHR30308">
    <property type="entry name" value="TMRNA-BINDING COMPONENT OF TRANS-TRANSLATION TAGGING COMPLEX"/>
    <property type="match status" value="1"/>
</dbReference>
<dbReference type="Pfam" id="PF01668">
    <property type="entry name" value="SmpB"/>
    <property type="match status" value="1"/>
</dbReference>
<dbReference type="SUPFAM" id="SSF74982">
    <property type="entry name" value="Small protein B (SmpB)"/>
    <property type="match status" value="1"/>
</dbReference>
<dbReference type="PROSITE" id="PS01317">
    <property type="entry name" value="SSRP"/>
    <property type="match status" value="1"/>
</dbReference>
<organism>
    <name type="scientific">Streptococcus agalactiae serotype III (strain NEM316)</name>
    <dbReference type="NCBI Taxonomy" id="211110"/>
    <lineage>
        <taxon>Bacteria</taxon>
        <taxon>Bacillati</taxon>
        <taxon>Bacillota</taxon>
        <taxon>Bacilli</taxon>
        <taxon>Lactobacillales</taxon>
        <taxon>Streptococcaceae</taxon>
        <taxon>Streptococcus</taxon>
    </lineage>
</organism>
<sequence>MVKGQGNVVAQNKKAHHDYTIVETIEAGIVLTGTEIKSVRAARITLKDGYAQIKNGEAWLINVHITPYDQGNIWNQDPDRTRKLLLKKREIEKISNELKGTGMTLVPLKVYLKDGFAKVLLGLAKGKHDYDKRESIKRREQNRDIARQLKNYNSR</sequence>
<protein>
    <recommendedName>
        <fullName evidence="1">SsrA-binding protein</fullName>
    </recommendedName>
    <alternativeName>
        <fullName evidence="1">Small protein B</fullName>
    </alternativeName>
</protein>
<name>SSRP_STRA3</name>
<accession>P66864</accession>
<accession>Q8DYJ9</accession>
<accession>Q8E455</accession>
<gene>
    <name evidence="1" type="primary">smpB</name>
    <name type="ordered locus">gbs1547</name>
</gene>
<reference key="1">
    <citation type="journal article" date="2002" name="Mol. Microbiol.">
        <title>Genome sequence of Streptococcus agalactiae, a pathogen causing invasive neonatal disease.</title>
        <authorList>
            <person name="Glaser P."/>
            <person name="Rusniok C."/>
            <person name="Buchrieser C."/>
            <person name="Chevalier F."/>
            <person name="Frangeul L."/>
            <person name="Msadek T."/>
            <person name="Zouine M."/>
            <person name="Couve E."/>
            <person name="Lalioui L."/>
            <person name="Poyart C."/>
            <person name="Trieu-Cuot P."/>
            <person name="Kunst F."/>
        </authorList>
    </citation>
    <scope>NUCLEOTIDE SEQUENCE [LARGE SCALE GENOMIC DNA]</scope>
    <source>
        <strain>NEM316</strain>
    </source>
</reference>
<comment type="function">
    <text evidence="1">Required for rescue of stalled ribosomes mediated by trans-translation. Binds to transfer-messenger RNA (tmRNA), required for stable association of tmRNA with ribosomes. tmRNA and SmpB together mimic tRNA shape, replacing the anticodon stem-loop with SmpB. tmRNA is encoded by the ssrA gene; the 2 termini fold to resemble tRNA(Ala) and it encodes a 'tag peptide', a short internal open reading frame. During trans-translation Ala-aminoacylated tmRNA acts like a tRNA, entering the A-site of stalled ribosomes, displacing the stalled mRNA. The ribosome then switches to translate the ORF on the tmRNA; the nascent peptide is terminated with the 'tag peptide' encoded by the tmRNA and targeted for degradation. The ribosome is freed to recommence translation, which seems to be the essential function of trans-translation.</text>
</comment>
<comment type="subcellular location">
    <subcellularLocation>
        <location evidence="1">Cytoplasm</location>
    </subcellularLocation>
    <text evidence="1">The tmRNA-SmpB complex associates with stalled 70S ribosomes.</text>
</comment>
<comment type="similarity">
    <text evidence="1">Belongs to the SmpB family.</text>
</comment>
<keyword id="KW-0963">Cytoplasm</keyword>
<keyword id="KW-0694">RNA-binding</keyword>
<feature type="chain" id="PRO_0000103036" description="SsrA-binding protein">
    <location>
        <begin position="1"/>
        <end position="155"/>
    </location>
</feature>